<proteinExistence type="inferred from homology"/>
<reference key="1">
    <citation type="journal article" date="1997" name="Am. J. Bot.">
        <title>Chloroplast DNA phylogeny, reticulate evolution, and biogeography of Paeonia (Paeoniaceae).</title>
        <authorList>
            <person name="Sang T."/>
            <person name="Crawford D.J."/>
            <person name="Stuessy T.F."/>
        </authorList>
    </citation>
    <scope>NUCLEOTIDE SEQUENCE [GENOMIC DNA]</scope>
</reference>
<dbReference type="EMBL" id="AF033614">
    <property type="protein sequence ID" value="AAB92546.1"/>
    <property type="molecule type" value="Genomic_DNA"/>
</dbReference>
<dbReference type="GO" id="GO:0009507">
    <property type="term" value="C:chloroplast"/>
    <property type="evidence" value="ECO:0007669"/>
    <property type="project" value="UniProtKB-SubCell"/>
</dbReference>
<dbReference type="GO" id="GO:0003723">
    <property type="term" value="F:RNA binding"/>
    <property type="evidence" value="ECO:0007669"/>
    <property type="project" value="UniProtKB-KW"/>
</dbReference>
<dbReference type="GO" id="GO:0006397">
    <property type="term" value="P:mRNA processing"/>
    <property type="evidence" value="ECO:0007669"/>
    <property type="project" value="UniProtKB-KW"/>
</dbReference>
<dbReference type="GO" id="GO:0008380">
    <property type="term" value="P:RNA splicing"/>
    <property type="evidence" value="ECO:0007669"/>
    <property type="project" value="UniProtKB-UniRule"/>
</dbReference>
<dbReference type="GO" id="GO:0008033">
    <property type="term" value="P:tRNA processing"/>
    <property type="evidence" value="ECO:0007669"/>
    <property type="project" value="UniProtKB-KW"/>
</dbReference>
<dbReference type="HAMAP" id="MF_01390">
    <property type="entry name" value="MatK"/>
    <property type="match status" value="1"/>
</dbReference>
<dbReference type="InterPro" id="IPR024937">
    <property type="entry name" value="Domain_X"/>
</dbReference>
<dbReference type="InterPro" id="IPR002866">
    <property type="entry name" value="Maturase_MatK"/>
</dbReference>
<dbReference type="InterPro" id="IPR024942">
    <property type="entry name" value="Maturase_MatK_N"/>
</dbReference>
<dbReference type="PANTHER" id="PTHR34811">
    <property type="entry name" value="MATURASE K"/>
    <property type="match status" value="1"/>
</dbReference>
<dbReference type="PANTHER" id="PTHR34811:SF1">
    <property type="entry name" value="MATURASE K"/>
    <property type="match status" value="1"/>
</dbReference>
<dbReference type="Pfam" id="PF01348">
    <property type="entry name" value="Intron_maturas2"/>
    <property type="match status" value="1"/>
</dbReference>
<dbReference type="Pfam" id="PF01824">
    <property type="entry name" value="MatK_N"/>
    <property type="match status" value="1"/>
</dbReference>
<geneLocation type="chloroplast"/>
<sequence length="496" mass="58541">MEKSQGYLELDKSWRHDFLYPLIFQEYIYALAHEQGLNRSILLENTDHDNKYSSLIVKRLITLIHQQNHFLIFDNDSNQNPFWKHNNNLYSQTISEGFVIIVEIPFSPRFVDSLEEKKKILKSNNLRSIHSIFPFLEDQILHLNFVANILIPYPIHLEIVVQSLRYRVKDASSLHLLRFFLFTLNKSISSFSKRNQRFFLFLYNSHVYEYESTFLFLRNKTSHLRSTSSGAFLERIFFYGKIKHLIEVFANDFQAILWLFKDPFMHYVRYQGKSILASKRTSLRMNKWKYYLVNFWQCQFYVWSQPGRVSINQLSNHSLDFLGYLSSVRRNPLAVRSQMLENSFLTDNAIKKFDIIVLLISLIGSLAKAKFCNVLGHPLSKPARADSSDSDIIERFVRICRNLSHYHSGSSKKKSLYRIKYILRLSCARTLARKHKTTVRSFLKRLGSELLEEFLTEDGQVISLIFPRTSSTSWRLYRGGIWYLDITCINDLANHE</sequence>
<keyword id="KW-0150">Chloroplast</keyword>
<keyword id="KW-0507">mRNA processing</keyword>
<keyword id="KW-0934">Plastid</keyword>
<keyword id="KW-0694">RNA-binding</keyword>
<keyword id="KW-0819">tRNA processing</keyword>
<name>MATK_PAEPE</name>
<feature type="chain" id="PRO_0000143569" description="Maturase K">
    <location>
        <begin position="1"/>
        <end position="496"/>
    </location>
</feature>
<comment type="function">
    <text evidence="1">Usually encoded in the trnK tRNA gene intron. Probably assists in splicing its own and other chloroplast group II introns.</text>
</comment>
<comment type="subcellular location">
    <subcellularLocation>
        <location>Plastid</location>
        <location>Chloroplast</location>
    </subcellularLocation>
</comment>
<comment type="similarity">
    <text evidence="1">Belongs to the intron maturase 2 family. MatK subfamily.</text>
</comment>
<protein>
    <recommendedName>
        <fullName evidence="1">Maturase K</fullName>
    </recommendedName>
    <alternativeName>
        <fullName evidence="1">Intron maturase</fullName>
    </alternativeName>
</protein>
<gene>
    <name evidence="1" type="primary">matK</name>
</gene>
<accession>Q7J5Z8</accession>
<evidence type="ECO:0000255" key="1">
    <source>
        <dbReference type="HAMAP-Rule" id="MF_01390"/>
    </source>
</evidence>
<organism>
    <name type="scientific">Paeonia peregrina</name>
    <name type="common">Common peony</name>
    <name type="synonym">Paeonia decora</name>
    <dbReference type="NCBI Taxonomy" id="40717"/>
    <lineage>
        <taxon>Eukaryota</taxon>
        <taxon>Viridiplantae</taxon>
        <taxon>Streptophyta</taxon>
        <taxon>Embryophyta</taxon>
        <taxon>Tracheophyta</taxon>
        <taxon>Spermatophyta</taxon>
        <taxon>Magnoliopsida</taxon>
        <taxon>eudicotyledons</taxon>
        <taxon>Gunneridae</taxon>
        <taxon>Pentapetalae</taxon>
        <taxon>Saxifragales</taxon>
        <taxon>Paeoniaceae</taxon>
        <taxon>Paeonia</taxon>
    </lineage>
</organism>